<gene>
    <name evidence="1" type="primary">hemC</name>
    <name type="ordered locus">SAHV_1657</name>
</gene>
<evidence type="ECO:0000255" key="1">
    <source>
        <dbReference type="HAMAP-Rule" id="MF_00260"/>
    </source>
</evidence>
<reference key="1">
    <citation type="journal article" date="2008" name="Antimicrob. Agents Chemother.">
        <title>Mutated response regulator graR is responsible for phenotypic conversion of Staphylococcus aureus from heterogeneous vancomycin-intermediate resistance to vancomycin-intermediate resistance.</title>
        <authorList>
            <person name="Neoh H.-M."/>
            <person name="Cui L."/>
            <person name="Yuzawa H."/>
            <person name="Takeuchi F."/>
            <person name="Matsuo M."/>
            <person name="Hiramatsu K."/>
        </authorList>
    </citation>
    <scope>NUCLEOTIDE SEQUENCE [LARGE SCALE GENOMIC DNA]</scope>
    <source>
        <strain>Mu3 / ATCC 700698</strain>
    </source>
</reference>
<sequence>MRKLVVGSRRSKLALTQSQQFINKLKAVEPNLEIEIKEIVTKGDRIVDKQLSKVGGKGLFVKEIQHELFEKNIDMAIHSLKDVPSVIPEGLTLGCIPDRELPFDAYISKTHTPLSQLPEGSIIGTSSLRRGAQILSKYPNLEIKWIRGNIDTRLEKLQTEDYDAIILAAAGLRRMGWSDDIVTSYLDRDTLLPAIGQGALGIECRSDDEELLTLLSKVHNDEVAKCVTAERTFLAEMDGSCQVPIAGYATISDQKEIEFTGLIMTPDGKERFEYTMNGTDPVELGKTVSNKLKEQGAYEIIKRLNEQH</sequence>
<proteinExistence type="inferred from homology"/>
<accession>A7X391</accession>
<name>HEM3_STAA1</name>
<dbReference type="EC" id="2.5.1.61" evidence="1"/>
<dbReference type="EMBL" id="AP009324">
    <property type="protein sequence ID" value="BAF78540.1"/>
    <property type="molecule type" value="Genomic_DNA"/>
</dbReference>
<dbReference type="RefSeq" id="WP_001230232.1">
    <property type="nucleotide sequence ID" value="NC_009782.1"/>
</dbReference>
<dbReference type="SMR" id="A7X391"/>
<dbReference type="KEGG" id="saw:SAHV_1657"/>
<dbReference type="HOGENOM" id="CLU_019704_0_2_9"/>
<dbReference type="UniPathway" id="UPA00251">
    <property type="reaction ID" value="UER00319"/>
</dbReference>
<dbReference type="GO" id="GO:0005737">
    <property type="term" value="C:cytoplasm"/>
    <property type="evidence" value="ECO:0007669"/>
    <property type="project" value="TreeGrafter"/>
</dbReference>
<dbReference type="GO" id="GO:0004418">
    <property type="term" value="F:hydroxymethylbilane synthase activity"/>
    <property type="evidence" value="ECO:0007669"/>
    <property type="project" value="UniProtKB-UniRule"/>
</dbReference>
<dbReference type="GO" id="GO:0006782">
    <property type="term" value="P:protoporphyrinogen IX biosynthetic process"/>
    <property type="evidence" value="ECO:0007669"/>
    <property type="project" value="UniProtKB-UniRule"/>
</dbReference>
<dbReference type="CDD" id="cd13646">
    <property type="entry name" value="PBP2_EcHMBS_like"/>
    <property type="match status" value="1"/>
</dbReference>
<dbReference type="FunFam" id="3.30.160.40:FF:000001">
    <property type="entry name" value="Porphobilinogen deaminase"/>
    <property type="match status" value="1"/>
</dbReference>
<dbReference type="FunFam" id="3.40.190.10:FF:000004">
    <property type="entry name" value="Porphobilinogen deaminase"/>
    <property type="match status" value="1"/>
</dbReference>
<dbReference type="FunFam" id="3.40.190.10:FF:000005">
    <property type="entry name" value="Porphobilinogen deaminase"/>
    <property type="match status" value="1"/>
</dbReference>
<dbReference type="Gene3D" id="3.40.190.10">
    <property type="entry name" value="Periplasmic binding protein-like II"/>
    <property type="match status" value="2"/>
</dbReference>
<dbReference type="Gene3D" id="3.30.160.40">
    <property type="entry name" value="Porphobilinogen deaminase, C-terminal domain"/>
    <property type="match status" value="1"/>
</dbReference>
<dbReference type="HAMAP" id="MF_00260">
    <property type="entry name" value="Porphobil_deam"/>
    <property type="match status" value="1"/>
</dbReference>
<dbReference type="InterPro" id="IPR000860">
    <property type="entry name" value="HemC"/>
</dbReference>
<dbReference type="InterPro" id="IPR022419">
    <property type="entry name" value="Porphobilin_deaminase_cofac_BS"/>
</dbReference>
<dbReference type="InterPro" id="IPR022417">
    <property type="entry name" value="Porphobilin_deaminase_N"/>
</dbReference>
<dbReference type="InterPro" id="IPR022418">
    <property type="entry name" value="Porphobilinogen_deaminase_C"/>
</dbReference>
<dbReference type="InterPro" id="IPR036803">
    <property type="entry name" value="Porphobilinogen_deaminase_C_sf"/>
</dbReference>
<dbReference type="NCBIfam" id="TIGR00212">
    <property type="entry name" value="hemC"/>
    <property type="match status" value="1"/>
</dbReference>
<dbReference type="PANTHER" id="PTHR11557">
    <property type="entry name" value="PORPHOBILINOGEN DEAMINASE"/>
    <property type="match status" value="1"/>
</dbReference>
<dbReference type="PANTHER" id="PTHR11557:SF0">
    <property type="entry name" value="PORPHOBILINOGEN DEAMINASE"/>
    <property type="match status" value="1"/>
</dbReference>
<dbReference type="Pfam" id="PF01379">
    <property type="entry name" value="Porphobil_deam"/>
    <property type="match status" value="1"/>
</dbReference>
<dbReference type="Pfam" id="PF03900">
    <property type="entry name" value="Porphobil_deamC"/>
    <property type="match status" value="1"/>
</dbReference>
<dbReference type="PIRSF" id="PIRSF001438">
    <property type="entry name" value="4pyrrol_synth_OHMeBilane_synth"/>
    <property type="match status" value="1"/>
</dbReference>
<dbReference type="PRINTS" id="PR00151">
    <property type="entry name" value="PORPHBDMNASE"/>
</dbReference>
<dbReference type="SUPFAM" id="SSF53850">
    <property type="entry name" value="Periplasmic binding protein-like II"/>
    <property type="match status" value="1"/>
</dbReference>
<dbReference type="SUPFAM" id="SSF54782">
    <property type="entry name" value="Porphobilinogen deaminase (hydroxymethylbilane synthase), C-terminal domain"/>
    <property type="match status" value="1"/>
</dbReference>
<dbReference type="PROSITE" id="PS00533">
    <property type="entry name" value="PORPHOBILINOGEN_DEAM"/>
    <property type="match status" value="1"/>
</dbReference>
<organism>
    <name type="scientific">Staphylococcus aureus (strain Mu3 / ATCC 700698)</name>
    <dbReference type="NCBI Taxonomy" id="418127"/>
    <lineage>
        <taxon>Bacteria</taxon>
        <taxon>Bacillati</taxon>
        <taxon>Bacillota</taxon>
        <taxon>Bacilli</taxon>
        <taxon>Bacillales</taxon>
        <taxon>Staphylococcaceae</taxon>
        <taxon>Staphylococcus</taxon>
    </lineage>
</organism>
<comment type="function">
    <text evidence="1">Tetrapolymerization of the monopyrrole PBG into the hydroxymethylbilane pre-uroporphyrinogen in several discrete steps.</text>
</comment>
<comment type="catalytic activity">
    <reaction evidence="1">
        <text>4 porphobilinogen + H2O = hydroxymethylbilane + 4 NH4(+)</text>
        <dbReference type="Rhea" id="RHEA:13185"/>
        <dbReference type="ChEBI" id="CHEBI:15377"/>
        <dbReference type="ChEBI" id="CHEBI:28938"/>
        <dbReference type="ChEBI" id="CHEBI:57845"/>
        <dbReference type="ChEBI" id="CHEBI:58126"/>
        <dbReference type="EC" id="2.5.1.61"/>
    </reaction>
</comment>
<comment type="cofactor">
    <cofactor evidence="1">
        <name>dipyrromethane</name>
        <dbReference type="ChEBI" id="CHEBI:60342"/>
    </cofactor>
    <text evidence="1">Binds 1 dipyrromethane group covalently.</text>
</comment>
<comment type="pathway">
    <text evidence="1">Porphyrin-containing compound metabolism; protoporphyrin-IX biosynthesis; coproporphyrinogen-III from 5-aminolevulinate: step 2/4.</text>
</comment>
<comment type="subunit">
    <text evidence="1">Monomer.</text>
</comment>
<comment type="miscellaneous">
    <text evidence="1">The porphobilinogen subunits are added to the dipyrromethane group.</text>
</comment>
<comment type="similarity">
    <text evidence="1">Belongs to the HMBS family.</text>
</comment>
<keyword id="KW-0627">Porphyrin biosynthesis</keyword>
<keyword id="KW-0808">Transferase</keyword>
<protein>
    <recommendedName>
        <fullName evidence="1">Porphobilinogen deaminase</fullName>
        <shortName evidence="1">PBG</shortName>
        <ecNumber evidence="1">2.5.1.61</ecNumber>
    </recommendedName>
    <alternativeName>
        <fullName evidence="1">Hydroxymethylbilane synthase</fullName>
        <shortName evidence="1">HMBS</shortName>
    </alternativeName>
    <alternativeName>
        <fullName evidence="1">Pre-uroporphyrinogen synthase</fullName>
    </alternativeName>
</protein>
<feature type="chain" id="PRO_1000047769" description="Porphobilinogen deaminase">
    <location>
        <begin position="1"/>
        <end position="308"/>
    </location>
</feature>
<feature type="modified residue" description="S-(dipyrrolylmethanemethyl)cysteine" evidence="1">
    <location>
        <position position="241"/>
    </location>
</feature>